<proteinExistence type="inferred from homology"/>
<accession>C1CAL1</accession>
<sequence>MANKKIRIRLKAYEHRTLDTAAAKIVESATRTGAQVAGPIPLPTERSLYTIIRATHKYKDSREQFEMRTHKRLIDIVNPTQKTVDALMKLDLPSGVNVEIKL</sequence>
<keyword id="KW-0687">Ribonucleoprotein</keyword>
<keyword id="KW-0689">Ribosomal protein</keyword>
<evidence type="ECO:0000255" key="1">
    <source>
        <dbReference type="HAMAP-Rule" id="MF_00508"/>
    </source>
</evidence>
<evidence type="ECO:0000305" key="2"/>
<protein>
    <recommendedName>
        <fullName evidence="1">Small ribosomal subunit protein uS10</fullName>
    </recommendedName>
    <alternativeName>
        <fullName evidence="2">30S ribosomal protein S10</fullName>
    </alternativeName>
</protein>
<dbReference type="EMBL" id="CP000918">
    <property type="protein sequence ID" value="ACO17838.1"/>
    <property type="molecule type" value="Genomic_DNA"/>
</dbReference>
<dbReference type="RefSeq" id="WP_001284513.1">
    <property type="nucleotide sequence ID" value="NC_012468.1"/>
</dbReference>
<dbReference type="SMR" id="C1CAL1"/>
<dbReference type="GeneID" id="93738956"/>
<dbReference type="KEGG" id="snm:SP70585_0264"/>
<dbReference type="HOGENOM" id="CLU_122625_1_3_9"/>
<dbReference type="Proteomes" id="UP000002211">
    <property type="component" value="Chromosome"/>
</dbReference>
<dbReference type="GO" id="GO:1990904">
    <property type="term" value="C:ribonucleoprotein complex"/>
    <property type="evidence" value="ECO:0007669"/>
    <property type="project" value="UniProtKB-KW"/>
</dbReference>
<dbReference type="GO" id="GO:0005840">
    <property type="term" value="C:ribosome"/>
    <property type="evidence" value="ECO:0007669"/>
    <property type="project" value="UniProtKB-KW"/>
</dbReference>
<dbReference type="GO" id="GO:0003735">
    <property type="term" value="F:structural constituent of ribosome"/>
    <property type="evidence" value="ECO:0007669"/>
    <property type="project" value="InterPro"/>
</dbReference>
<dbReference type="GO" id="GO:0000049">
    <property type="term" value="F:tRNA binding"/>
    <property type="evidence" value="ECO:0007669"/>
    <property type="project" value="UniProtKB-UniRule"/>
</dbReference>
<dbReference type="GO" id="GO:0006412">
    <property type="term" value="P:translation"/>
    <property type="evidence" value="ECO:0007669"/>
    <property type="project" value="UniProtKB-UniRule"/>
</dbReference>
<dbReference type="FunFam" id="3.30.70.600:FF:000001">
    <property type="entry name" value="30S ribosomal protein S10"/>
    <property type="match status" value="1"/>
</dbReference>
<dbReference type="Gene3D" id="3.30.70.600">
    <property type="entry name" value="Ribosomal protein S10 domain"/>
    <property type="match status" value="1"/>
</dbReference>
<dbReference type="HAMAP" id="MF_00508">
    <property type="entry name" value="Ribosomal_uS10"/>
    <property type="match status" value="1"/>
</dbReference>
<dbReference type="InterPro" id="IPR001848">
    <property type="entry name" value="Ribosomal_uS10"/>
</dbReference>
<dbReference type="InterPro" id="IPR018268">
    <property type="entry name" value="Ribosomal_uS10_CS"/>
</dbReference>
<dbReference type="InterPro" id="IPR027486">
    <property type="entry name" value="Ribosomal_uS10_dom"/>
</dbReference>
<dbReference type="InterPro" id="IPR036838">
    <property type="entry name" value="Ribosomal_uS10_dom_sf"/>
</dbReference>
<dbReference type="NCBIfam" id="NF001861">
    <property type="entry name" value="PRK00596.1"/>
    <property type="match status" value="1"/>
</dbReference>
<dbReference type="NCBIfam" id="TIGR01049">
    <property type="entry name" value="rpsJ_bact"/>
    <property type="match status" value="1"/>
</dbReference>
<dbReference type="PANTHER" id="PTHR11700">
    <property type="entry name" value="30S RIBOSOMAL PROTEIN S10 FAMILY MEMBER"/>
    <property type="match status" value="1"/>
</dbReference>
<dbReference type="Pfam" id="PF00338">
    <property type="entry name" value="Ribosomal_S10"/>
    <property type="match status" value="1"/>
</dbReference>
<dbReference type="PRINTS" id="PR00971">
    <property type="entry name" value="RIBOSOMALS10"/>
</dbReference>
<dbReference type="SMART" id="SM01403">
    <property type="entry name" value="Ribosomal_S10"/>
    <property type="match status" value="1"/>
</dbReference>
<dbReference type="SUPFAM" id="SSF54999">
    <property type="entry name" value="Ribosomal protein S10"/>
    <property type="match status" value="1"/>
</dbReference>
<dbReference type="PROSITE" id="PS00361">
    <property type="entry name" value="RIBOSOMAL_S10"/>
    <property type="match status" value="1"/>
</dbReference>
<organism>
    <name type="scientific">Streptococcus pneumoniae (strain 70585)</name>
    <dbReference type="NCBI Taxonomy" id="488221"/>
    <lineage>
        <taxon>Bacteria</taxon>
        <taxon>Bacillati</taxon>
        <taxon>Bacillota</taxon>
        <taxon>Bacilli</taxon>
        <taxon>Lactobacillales</taxon>
        <taxon>Streptococcaceae</taxon>
        <taxon>Streptococcus</taxon>
    </lineage>
</organism>
<name>RS10_STRP7</name>
<feature type="chain" id="PRO_1000146078" description="Small ribosomal subunit protein uS10">
    <location>
        <begin position="1"/>
        <end position="102"/>
    </location>
</feature>
<gene>
    <name evidence="1" type="primary">rpsJ</name>
    <name type="ordered locus">SP70585_0264</name>
</gene>
<reference key="1">
    <citation type="journal article" date="2010" name="Genome Biol.">
        <title>Structure and dynamics of the pan-genome of Streptococcus pneumoniae and closely related species.</title>
        <authorList>
            <person name="Donati C."/>
            <person name="Hiller N.L."/>
            <person name="Tettelin H."/>
            <person name="Muzzi A."/>
            <person name="Croucher N.J."/>
            <person name="Angiuoli S.V."/>
            <person name="Oggioni M."/>
            <person name="Dunning Hotopp J.C."/>
            <person name="Hu F.Z."/>
            <person name="Riley D.R."/>
            <person name="Covacci A."/>
            <person name="Mitchell T.J."/>
            <person name="Bentley S.D."/>
            <person name="Kilian M."/>
            <person name="Ehrlich G.D."/>
            <person name="Rappuoli R."/>
            <person name="Moxon E.R."/>
            <person name="Masignani V."/>
        </authorList>
    </citation>
    <scope>NUCLEOTIDE SEQUENCE [LARGE SCALE GENOMIC DNA]</scope>
    <source>
        <strain>70585</strain>
    </source>
</reference>
<comment type="function">
    <text evidence="1">Involved in the binding of tRNA to the ribosomes.</text>
</comment>
<comment type="subunit">
    <text evidence="1">Part of the 30S ribosomal subunit.</text>
</comment>
<comment type="similarity">
    <text evidence="1">Belongs to the universal ribosomal protein uS10 family.</text>
</comment>